<sequence>MAKKSTPVDSGRSKGKKASAPRGGGPAVIATNRKARHDYHILDTYECGVVLVGTEVKALREGKASLVDAYATIDAGEVWLRGLHIPEYSRGNFWNHTPRRVRKLLLHRREIDSLTGKVRDGNHTLVPLQLYFVDGRLKCELALARGKQDYDKRQDIKRRTEEREVVRELGRKIKGMKG</sequence>
<organism>
    <name type="scientific">Corynebacterium urealyticum (strain ATCC 43042 / DSM 7109)</name>
    <dbReference type="NCBI Taxonomy" id="504474"/>
    <lineage>
        <taxon>Bacteria</taxon>
        <taxon>Bacillati</taxon>
        <taxon>Actinomycetota</taxon>
        <taxon>Actinomycetes</taxon>
        <taxon>Mycobacteriales</taxon>
        <taxon>Corynebacteriaceae</taxon>
        <taxon>Corynebacterium</taxon>
    </lineage>
</organism>
<reference key="1">
    <citation type="journal article" date="2008" name="J. Biotechnol.">
        <title>The lifestyle of Corynebacterium urealyticum derived from its complete genome sequence established by pyrosequencing.</title>
        <authorList>
            <person name="Tauch A."/>
            <person name="Trost E."/>
            <person name="Tilker A."/>
            <person name="Ludewig U."/>
            <person name="Schneiker S."/>
            <person name="Goesmann A."/>
            <person name="Arnold W."/>
            <person name="Bekel T."/>
            <person name="Brinkrolf K."/>
            <person name="Brune I."/>
            <person name="Goetker S."/>
            <person name="Kalinowski J."/>
            <person name="Kamp P.-B."/>
            <person name="Lobo F.P."/>
            <person name="Viehoever P."/>
            <person name="Weisshaar B."/>
            <person name="Soriano F."/>
            <person name="Droege M."/>
            <person name="Puehler A."/>
        </authorList>
    </citation>
    <scope>NUCLEOTIDE SEQUENCE [LARGE SCALE GENOMIC DNA]</scope>
    <source>
        <strain>ATCC 43042 / DSM 7109</strain>
    </source>
</reference>
<gene>
    <name evidence="1" type="primary">smpB</name>
    <name type="ordered locus">cu1500</name>
</gene>
<name>SSRP_CORU7</name>
<evidence type="ECO:0000255" key="1">
    <source>
        <dbReference type="HAMAP-Rule" id="MF_00023"/>
    </source>
</evidence>
<evidence type="ECO:0000256" key="2">
    <source>
        <dbReference type="SAM" id="MobiDB-lite"/>
    </source>
</evidence>
<feature type="chain" id="PRO_1000090143" description="SsrA-binding protein">
    <location>
        <begin position="1"/>
        <end position="178"/>
    </location>
</feature>
<feature type="region of interest" description="Disordered" evidence="2">
    <location>
        <begin position="1"/>
        <end position="28"/>
    </location>
</feature>
<comment type="function">
    <text evidence="1">Required for rescue of stalled ribosomes mediated by trans-translation. Binds to transfer-messenger RNA (tmRNA), required for stable association of tmRNA with ribosomes. tmRNA and SmpB together mimic tRNA shape, replacing the anticodon stem-loop with SmpB. tmRNA is encoded by the ssrA gene; the 2 termini fold to resemble tRNA(Ala) and it encodes a 'tag peptide', a short internal open reading frame. During trans-translation Ala-aminoacylated tmRNA acts like a tRNA, entering the A-site of stalled ribosomes, displacing the stalled mRNA. The ribosome then switches to translate the ORF on the tmRNA; the nascent peptide is terminated with the 'tag peptide' encoded by the tmRNA and targeted for degradation. The ribosome is freed to recommence translation, which seems to be the essential function of trans-translation.</text>
</comment>
<comment type="subcellular location">
    <subcellularLocation>
        <location evidence="1">Cytoplasm</location>
    </subcellularLocation>
    <text evidence="1">The tmRNA-SmpB complex associates with stalled 70S ribosomes.</text>
</comment>
<comment type="similarity">
    <text evidence="1">Belongs to the SmpB family.</text>
</comment>
<proteinExistence type="inferred from homology"/>
<accession>B1VI76</accession>
<dbReference type="EMBL" id="AM942444">
    <property type="protein sequence ID" value="CAQ05460.1"/>
    <property type="molecule type" value="Genomic_DNA"/>
</dbReference>
<dbReference type="RefSeq" id="WP_012360745.1">
    <property type="nucleotide sequence ID" value="NC_010545.1"/>
</dbReference>
<dbReference type="SMR" id="B1VI76"/>
<dbReference type="STRING" id="504474.cu1500"/>
<dbReference type="GeneID" id="60604279"/>
<dbReference type="KEGG" id="cur:cu1500"/>
<dbReference type="eggNOG" id="COG0691">
    <property type="taxonomic scope" value="Bacteria"/>
</dbReference>
<dbReference type="HOGENOM" id="CLU_108953_2_1_11"/>
<dbReference type="Proteomes" id="UP000001727">
    <property type="component" value="Chromosome"/>
</dbReference>
<dbReference type="GO" id="GO:0005829">
    <property type="term" value="C:cytosol"/>
    <property type="evidence" value="ECO:0007669"/>
    <property type="project" value="TreeGrafter"/>
</dbReference>
<dbReference type="GO" id="GO:0003723">
    <property type="term" value="F:RNA binding"/>
    <property type="evidence" value="ECO:0007669"/>
    <property type="project" value="UniProtKB-UniRule"/>
</dbReference>
<dbReference type="GO" id="GO:0070929">
    <property type="term" value="P:trans-translation"/>
    <property type="evidence" value="ECO:0007669"/>
    <property type="project" value="UniProtKB-UniRule"/>
</dbReference>
<dbReference type="CDD" id="cd09294">
    <property type="entry name" value="SmpB"/>
    <property type="match status" value="1"/>
</dbReference>
<dbReference type="Gene3D" id="2.40.280.10">
    <property type="match status" value="1"/>
</dbReference>
<dbReference type="HAMAP" id="MF_00023">
    <property type="entry name" value="SmpB"/>
    <property type="match status" value="1"/>
</dbReference>
<dbReference type="InterPro" id="IPR023620">
    <property type="entry name" value="SmpB"/>
</dbReference>
<dbReference type="InterPro" id="IPR000037">
    <property type="entry name" value="SsrA-bd_prot"/>
</dbReference>
<dbReference type="InterPro" id="IPR020081">
    <property type="entry name" value="SsrA-bd_prot_CS"/>
</dbReference>
<dbReference type="NCBIfam" id="NF003843">
    <property type="entry name" value="PRK05422.1"/>
    <property type="match status" value="1"/>
</dbReference>
<dbReference type="NCBIfam" id="TIGR00086">
    <property type="entry name" value="smpB"/>
    <property type="match status" value="1"/>
</dbReference>
<dbReference type="PANTHER" id="PTHR30308:SF2">
    <property type="entry name" value="SSRA-BINDING PROTEIN"/>
    <property type="match status" value="1"/>
</dbReference>
<dbReference type="PANTHER" id="PTHR30308">
    <property type="entry name" value="TMRNA-BINDING COMPONENT OF TRANS-TRANSLATION TAGGING COMPLEX"/>
    <property type="match status" value="1"/>
</dbReference>
<dbReference type="Pfam" id="PF01668">
    <property type="entry name" value="SmpB"/>
    <property type="match status" value="1"/>
</dbReference>
<dbReference type="SUPFAM" id="SSF74982">
    <property type="entry name" value="Small protein B (SmpB)"/>
    <property type="match status" value="1"/>
</dbReference>
<dbReference type="PROSITE" id="PS01317">
    <property type="entry name" value="SSRP"/>
    <property type="match status" value="1"/>
</dbReference>
<keyword id="KW-0963">Cytoplasm</keyword>
<keyword id="KW-1185">Reference proteome</keyword>
<keyword id="KW-0694">RNA-binding</keyword>
<protein>
    <recommendedName>
        <fullName evidence="1">SsrA-binding protein</fullName>
    </recommendedName>
    <alternativeName>
        <fullName evidence="1">Small protein B</fullName>
    </alternativeName>
</protein>